<proteinExistence type="inferred from homology"/>
<sequence length="249" mass="27455">MKAQVRTLTGEIAHEIDLPEIFREEYRPDLIKRAVLALQSTRFQPHGTNPYAGMRTSAESWGSGRGAAQVPRLKNGSRVARVPQATGGRAAHPPKVEKILVKEINRKEKRKALRSAVAASTYPDLVRERGHLFEGDLPLVFEDRFEEVTRTGDVIAALTALGVYADVERAKGSRKVRAGRGTMRGRRYKQRKSVLIVTGGEPLRAARNLAGVDAVAVDQLNAELLAPGTQAGRLTIWTESAIRRLEEFS</sequence>
<keyword id="KW-0687">Ribonucleoprotein</keyword>
<keyword id="KW-0689">Ribosomal protein</keyword>
<keyword id="KW-0694">RNA-binding</keyword>
<keyword id="KW-0699">rRNA-binding</keyword>
<gene>
    <name evidence="1" type="primary">rpl4</name>
    <name type="ordered locus">Memar_0565</name>
</gene>
<dbReference type="EMBL" id="CP000562">
    <property type="protein sequence ID" value="ABN56498.1"/>
    <property type="molecule type" value="Genomic_DNA"/>
</dbReference>
<dbReference type="RefSeq" id="WP_011843408.1">
    <property type="nucleotide sequence ID" value="NC_009051.1"/>
</dbReference>
<dbReference type="SMR" id="A3CSZ8"/>
<dbReference type="STRING" id="368407.Memar_0565"/>
<dbReference type="GeneID" id="4846972"/>
<dbReference type="KEGG" id="mem:Memar_0565"/>
<dbReference type="eggNOG" id="arCOG04071">
    <property type="taxonomic scope" value="Archaea"/>
</dbReference>
<dbReference type="HOGENOM" id="CLU_026535_0_0_2"/>
<dbReference type="OrthoDB" id="10737at2157"/>
<dbReference type="Proteomes" id="UP000002146">
    <property type="component" value="Chromosome"/>
</dbReference>
<dbReference type="GO" id="GO:1990904">
    <property type="term" value="C:ribonucleoprotein complex"/>
    <property type="evidence" value="ECO:0007669"/>
    <property type="project" value="UniProtKB-KW"/>
</dbReference>
<dbReference type="GO" id="GO:0005840">
    <property type="term" value="C:ribosome"/>
    <property type="evidence" value="ECO:0007669"/>
    <property type="project" value="UniProtKB-KW"/>
</dbReference>
<dbReference type="GO" id="GO:0019843">
    <property type="term" value="F:rRNA binding"/>
    <property type="evidence" value="ECO:0007669"/>
    <property type="project" value="UniProtKB-UniRule"/>
</dbReference>
<dbReference type="GO" id="GO:0003735">
    <property type="term" value="F:structural constituent of ribosome"/>
    <property type="evidence" value="ECO:0007669"/>
    <property type="project" value="InterPro"/>
</dbReference>
<dbReference type="GO" id="GO:0006412">
    <property type="term" value="P:translation"/>
    <property type="evidence" value="ECO:0007669"/>
    <property type="project" value="UniProtKB-UniRule"/>
</dbReference>
<dbReference type="Gene3D" id="3.40.1370.10">
    <property type="match status" value="1"/>
</dbReference>
<dbReference type="HAMAP" id="MF_01328_A">
    <property type="entry name" value="Ribosomal_uL4_A"/>
    <property type="match status" value="1"/>
</dbReference>
<dbReference type="InterPro" id="IPR002136">
    <property type="entry name" value="Ribosomal_uL4"/>
</dbReference>
<dbReference type="InterPro" id="IPR023574">
    <property type="entry name" value="Ribosomal_uL4_dom_sf"/>
</dbReference>
<dbReference type="InterPro" id="IPR013000">
    <property type="entry name" value="Ribosomal_uL4_euk/arc_CS"/>
</dbReference>
<dbReference type="InterPro" id="IPR045240">
    <property type="entry name" value="Ribosomal_uL4_euk/arch"/>
</dbReference>
<dbReference type="InterPro" id="IPR019970">
    <property type="entry name" value="Ribosomall_uL4-arc"/>
</dbReference>
<dbReference type="NCBIfam" id="TIGR03672">
    <property type="entry name" value="rpl4p_arch"/>
    <property type="match status" value="1"/>
</dbReference>
<dbReference type="PANTHER" id="PTHR19431">
    <property type="entry name" value="60S RIBOSOMAL PROTEIN L4"/>
    <property type="match status" value="1"/>
</dbReference>
<dbReference type="Pfam" id="PF00573">
    <property type="entry name" value="Ribosomal_L4"/>
    <property type="match status" value="1"/>
</dbReference>
<dbReference type="SUPFAM" id="SSF52166">
    <property type="entry name" value="Ribosomal protein L4"/>
    <property type="match status" value="1"/>
</dbReference>
<dbReference type="PROSITE" id="PS00939">
    <property type="entry name" value="RIBOSOMAL_L1E"/>
    <property type="match status" value="1"/>
</dbReference>
<comment type="function">
    <text evidence="1">One of the primary rRNA binding proteins, this protein initially binds near the 5'-end of the 23S rRNA. It is important during the early stages of 50S assembly. It makes multiple contacts with different domains of the 23S rRNA in the assembled 50S subunit and ribosome.</text>
</comment>
<comment type="function">
    <text evidence="1">Forms part of the polypeptide exit tunnel.</text>
</comment>
<comment type="subunit">
    <text evidence="1">Part of the 50S ribosomal subunit.</text>
</comment>
<comment type="similarity">
    <text evidence="1">Belongs to the universal ribosomal protein uL4 family.</text>
</comment>
<accession>A3CSZ8</accession>
<evidence type="ECO:0000255" key="1">
    <source>
        <dbReference type="HAMAP-Rule" id="MF_01328"/>
    </source>
</evidence>
<evidence type="ECO:0000305" key="2"/>
<protein>
    <recommendedName>
        <fullName evidence="1">Large ribosomal subunit protein uL4</fullName>
    </recommendedName>
    <alternativeName>
        <fullName evidence="2">50S ribosomal protein L4</fullName>
    </alternativeName>
</protein>
<reference key="1">
    <citation type="journal article" date="2009" name="Stand. Genomic Sci.">
        <title>Complete genome sequence of Methanoculleus marisnigri Romesser et al. 1981 type strain JR1.</title>
        <authorList>
            <person name="Anderson I.J."/>
            <person name="Sieprawska-Lupa M."/>
            <person name="Lapidus A."/>
            <person name="Nolan M."/>
            <person name="Copeland A."/>
            <person name="Glavina Del Rio T."/>
            <person name="Tice H."/>
            <person name="Dalin E."/>
            <person name="Barry K."/>
            <person name="Saunders E."/>
            <person name="Han C."/>
            <person name="Brettin T."/>
            <person name="Detter J.C."/>
            <person name="Bruce D."/>
            <person name="Mikhailova N."/>
            <person name="Pitluck S."/>
            <person name="Hauser L."/>
            <person name="Land M."/>
            <person name="Lucas S."/>
            <person name="Richardson P."/>
            <person name="Whitman W.B."/>
            <person name="Kyrpides N.C."/>
        </authorList>
    </citation>
    <scope>NUCLEOTIDE SEQUENCE [LARGE SCALE GENOMIC DNA]</scope>
    <source>
        <strain>ATCC 35101 / DSM 1498 / JR1</strain>
    </source>
</reference>
<organism>
    <name type="scientific">Methanoculleus marisnigri (strain ATCC 35101 / DSM 1498 / JR1)</name>
    <dbReference type="NCBI Taxonomy" id="368407"/>
    <lineage>
        <taxon>Archaea</taxon>
        <taxon>Methanobacteriati</taxon>
        <taxon>Methanobacteriota</taxon>
        <taxon>Stenosarchaea group</taxon>
        <taxon>Methanomicrobia</taxon>
        <taxon>Methanomicrobiales</taxon>
        <taxon>Methanomicrobiaceae</taxon>
        <taxon>Methanoculleus</taxon>
    </lineage>
</organism>
<feature type="chain" id="PRO_1000052440" description="Large ribosomal subunit protein uL4">
    <location>
        <begin position="1"/>
        <end position="249"/>
    </location>
</feature>
<name>RL4_METMJ</name>